<protein>
    <recommendedName>
        <fullName evidence="1">3-dehydroquinate synthase</fullName>
        <shortName evidence="1">DHQS</shortName>
        <ecNumber evidence="1">4.2.3.4</ecNumber>
    </recommendedName>
</protein>
<reference key="1">
    <citation type="journal article" date="2013" name="Stand. Genomic Sci.">
        <title>Complete genome sequence of Arthrobacter sp. strain FB24.</title>
        <authorList>
            <person name="Nakatsu C.H."/>
            <person name="Barabote R."/>
            <person name="Thompson S."/>
            <person name="Bruce D."/>
            <person name="Detter C."/>
            <person name="Brettin T."/>
            <person name="Han C."/>
            <person name="Beasley F."/>
            <person name="Chen W."/>
            <person name="Konopka A."/>
            <person name="Xie G."/>
        </authorList>
    </citation>
    <scope>NUCLEOTIDE SEQUENCE [LARGE SCALE GENOMIC DNA]</scope>
    <source>
        <strain>FB24</strain>
    </source>
</reference>
<dbReference type="EC" id="4.2.3.4" evidence="1"/>
<dbReference type="EMBL" id="CP000454">
    <property type="protein sequence ID" value="ABK03652.1"/>
    <property type="molecule type" value="Genomic_DNA"/>
</dbReference>
<dbReference type="RefSeq" id="WP_011692116.1">
    <property type="nucleotide sequence ID" value="NC_008541.1"/>
</dbReference>
<dbReference type="SMR" id="A0JX82"/>
<dbReference type="STRING" id="290399.Arth_2272"/>
<dbReference type="KEGG" id="art:Arth_2272"/>
<dbReference type="eggNOG" id="COG0337">
    <property type="taxonomic scope" value="Bacteria"/>
</dbReference>
<dbReference type="HOGENOM" id="CLU_001201_0_3_11"/>
<dbReference type="OrthoDB" id="9806583at2"/>
<dbReference type="UniPathway" id="UPA00053">
    <property type="reaction ID" value="UER00085"/>
</dbReference>
<dbReference type="Proteomes" id="UP000000754">
    <property type="component" value="Chromosome"/>
</dbReference>
<dbReference type="GO" id="GO:0005737">
    <property type="term" value="C:cytoplasm"/>
    <property type="evidence" value="ECO:0007669"/>
    <property type="project" value="UniProtKB-SubCell"/>
</dbReference>
<dbReference type="GO" id="GO:0003856">
    <property type="term" value="F:3-dehydroquinate synthase activity"/>
    <property type="evidence" value="ECO:0007669"/>
    <property type="project" value="UniProtKB-UniRule"/>
</dbReference>
<dbReference type="GO" id="GO:0046872">
    <property type="term" value="F:metal ion binding"/>
    <property type="evidence" value="ECO:0007669"/>
    <property type="project" value="UniProtKB-KW"/>
</dbReference>
<dbReference type="GO" id="GO:0000166">
    <property type="term" value="F:nucleotide binding"/>
    <property type="evidence" value="ECO:0007669"/>
    <property type="project" value="UniProtKB-KW"/>
</dbReference>
<dbReference type="GO" id="GO:0008652">
    <property type="term" value="P:amino acid biosynthetic process"/>
    <property type="evidence" value="ECO:0007669"/>
    <property type="project" value="UniProtKB-KW"/>
</dbReference>
<dbReference type="GO" id="GO:0009073">
    <property type="term" value="P:aromatic amino acid family biosynthetic process"/>
    <property type="evidence" value="ECO:0007669"/>
    <property type="project" value="UniProtKB-KW"/>
</dbReference>
<dbReference type="GO" id="GO:0009423">
    <property type="term" value="P:chorismate biosynthetic process"/>
    <property type="evidence" value="ECO:0007669"/>
    <property type="project" value="UniProtKB-UniRule"/>
</dbReference>
<dbReference type="CDD" id="cd08195">
    <property type="entry name" value="DHQS"/>
    <property type="match status" value="1"/>
</dbReference>
<dbReference type="FunFam" id="3.40.50.1970:FF:000012">
    <property type="entry name" value="3-dehydroquinate synthase"/>
    <property type="match status" value="1"/>
</dbReference>
<dbReference type="Gene3D" id="3.40.50.1970">
    <property type="match status" value="1"/>
</dbReference>
<dbReference type="Gene3D" id="1.20.1090.10">
    <property type="entry name" value="Dehydroquinate synthase-like - alpha domain"/>
    <property type="match status" value="1"/>
</dbReference>
<dbReference type="HAMAP" id="MF_00110">
    <property type="entry name" value="DHQ_synthase"/>
    <property type="match status" value="1"/>
</dbReference>
<dbReference type="InterPro" id="IPR050071">
    <property type="entry name" value="Dehydroquinate_synthase"/>
</dbReference>
<dbReference type="InterPro" id="IPR016037">
    <property type="entry name" value="DHQ_synth_AroB"/>
</dbReference>
<dbReference type="InterPro" id="IPR030963">
    <property type="entry name" value="DHQ_synth_fam"/>
</dbReference>
<dbReference type="InterPro" id="IPR030960">
    <property type="entry name" value="DHQS/DOIS_N"/>
</dbReference>
<dbReference type="InterPro" id="IPR056179">
    <property type="entry name" value="DHQS_C"/>
</dbReference>
<dbReference type="NCBIfam" id="TIGR01357">
    <property type="entry name" value="aroB"/>
    <property type="match status" value="1"/>
</dbReference>
<dbReference type="PANTHER" id="PTHR43622">
    <property type="entry name" value="3-DEHYDROQUINATE SYNTHASE"/>
    <property type="match status" value="1"/>
</dbReference>
<dbReference type="PANTHER" id="PTHR43622:SF7">
    <property type="entry name" value="3-DEHYDROQUINATE SYNTHASE, CHLOROPLASTIC"/>
    <property type="match status" value="1"/>
</dbReference>
<dbReference type="Pfam" id="PF01761">
    <property type="entry name" value="DHQ_synthase"/>
    <property type="match status" value="1"/>
</dbReference>
<dbReference type="Pfam" id="PF24621">
    <property type="entry name" value="DHQS_C"/>
    <property type="match status" value="1"/>
</dbReference>
<dbReference type="PIRSF" id="PIRSF001455">
    <property type="entry name" value="DHQ_synth"/>
    <property type="match status" value="1"/>
</dbReference>
<dbReference type="SUPFAM" id="SSF56796">
    <property type="entry name" value="Dehydroquinate synthase-like"/>
    <property type="match status" value="1"/>
</dbReference>
<feature type="chain" id="PRO_1000094453" description="3-dehydroquinate synthase">
    <location>
        <begin position="1"/>
        <end position="363"/>
    </location>
</feature>
<feature type="binding site" evidence="1">
    <location>
        <begin position="75"/>
        <end position="80"/>
    </location>
    <ligand>
        <name>NAD(+)</name>
        <dbReference type="ChEBI" id="CHEBI:57540"/>
    </ligand>
</feature>
<feature type="binding site" evidence="1">
    <location>
        <begin position="109"/>
        <end position="113"/>
    </location>
    <ligand>
        <name>NAD(+)</name>
        <dbReference type="ChEBI" id="CHEBI:57540"/>
    </ligand>
</feature>
<feature type="binding site" evidence="1">
    <location>
        <begin position="133"/>
        <end position="134"/>
    </location>
    <ligand>
        <name>NAD(+)</name>
        <dbReference type="ChEBI" id="CHEBI:57540"/>
    </ligand>
</feature>
<feature type="binding site" evidence="1">
    <location>
        <position position="146"/>
    </location>
    <ligand>
        <name>NAD(+)</name>
        <dbReference type="ChEBI" id="CHEBI:57540"/>
    </ligand>
</feature>
<feature type="binding site" evidence="1">
    <location>
        <position position="155"/>
    </location>
    <ligand>
        <name>NAD(+)</name>
        <dbReference type="ChEBI" id="CHEBI:57540"/>
    </ligand>
</feature>
<feature type="binding site" evidence="1">
    <location>
        <begin position="173"/>
        <end position="176"/>
    </location>
    <ligand>
        <name>NAD(+)</name>
        <dbReference type="ChEBI" id="CHEBI:57540"/>
    </ligand>
</feature>
<feature type="binding site" evidence="1">
    <location>
        <position position="188"/>
    </location>
    <ligand>
        <name>Zn(2+)</name>
        <dbReference type="ChEBI" id="CHEBI:29105"/>
    </ligand>
</feature>
<feature type="binding site" evidence="1">
    <location>
        <position position="251"/>
    </location>
    <ligand>
        <name>Zn(2+)</name>
        <dbReference type="ChEBI" id="CHEBI:29105"/>
    </ligand>
</feature>
<feature type="binding site" evidence="1">
    <location>
        <position position="267"/>
    </location>
    <ligand>
        <name>Zn(2+)</name>
        <dbReference type="ChEBI" id="CHEBI:29105"/>
    </ligand>
</feature>
<sequence>MSSESTVIKVTGKSAADNYDVVVGRGLLGRLPELLGERVKRVLVIHPRALRLTGDTVRDELASAGFTALTAEIPDAEEGKHIQVAAFCWQVLGQNDFTRSDAVVAVGGGAVTDLAGFVAATWLRGVKVIHMPTSLLGMVDASVGGKTGINTAEGKNLVGAFHPPAAVLADLDTLSTLPKNELISGMAEVIKCGFIADPAILDLVEKDPSAVTDPQSAFLRELIERAIAVKADVVSEDLKETGRREILNYGHTLGHAIELVERYSWRHGAAVSVGMMFAAELARSVGRLSDADADRHRTILETLGLPITYRRDRWQGLLDGMRRDKKSRGDLLRFVVLDGIARPGILDVPDTSLLFAAYQEIAS</sequence>
<proteinExistence type="inferred from homology"/>
<accession>A0JX82</accession>
<name>AROB_ARTS2</name>
<evidence type="ECO:0000255" key="1">
    <source>
        <dbReference type="HAMAP-Rule" id="MF_00110"/>
    </source>
</evidence>
<keyword id="KW-0028">Amino-acid biosynthesis</keyword>
<keyword id="KW-0057">Aromatic amino acid biosynthesis</keyword>
<keyword id="KW-0170">Cobalt</keyword>
<keyword id="KW-0963">Cytoplasm</keyword>
<keyword id="KW-0456">Lyase</keyword>
<keyword id="KW-0479">Metal-binding</keyword>
<keyword id="KW-0520">NAD</keyword>
<keyword id="KW-0547">Nucleotide-binding</keyword>
<keyword id="KW-1185">Reference proteome</keyword>
<keyword id="KW-0862">Zinc</keyword>
<gene>
    <name evidence="1" type="primary">aroB</name>
    <name type="ordered locus">Arth_2272</name>
</gene>
<comment type="function">
    <text evidence="1">Catalyzes the conversion of 3-deoxy-D-arabino-heptulosonate 7-phosphate (DAHP) to dehydroquinate (DHQ).</text>
</comment>
<comment type="catalytic activity">
    <reaction evidence="1">
        <text>7-phospho-2-dehydro-3-deoxy-D-arabino-heptonate = 3-dehydroquinate + phosphate</text>
        <dbReference type="Rhea" id="RHEA:21968"/>
        <dbReference type="ChEBI" id="CHEBI:32364"/>
        <dbReference type="ChEBI" id="CHEBI:43474"/>
        <dbReference type="ChEBI" id="CHEBI:58394"/>
        <dbReference type="EC" id="4.2.3.4"/>
    </reaction>
</comment>
<comment type="cofactor">
    <cofactor evidence="1">
        <name>Co(2+)</name>
        <dbReference type="ChEBI" id="CHEBI:48828"/>
    </cofactor>
    <cofactor evidence="1">
        <name>Zn(2+)</name>
        <dbReference type="ChEBI" id="CHEBI:29105"/>
    </cofactor>
    <text evidence="1">Binds 1 divalent metal cation per subunit. Can use either Co(2+) or Zn(2+).</text>
</comment>
<comment type="cofactor">
    <cofactor evidence="1">
        <name>NAD(+)</name>
        <dbReference type="ChEBI" id="CHEBI:57540"/>
    </cofactor>
</comment>
<comment type="pathway">
    <text evidence="1">Metabolic intermediate biosynthesis; chorismate biosynthesis; chorismate from D-erythrose 4-phosphate and phosphoenolpyruvate: step 2/7.</text>
</comment>
<comment type="subcellular location">
    <subcellularLocation>
        <location evidence="1">Cytoplasm</location>
    </subcellularLocation>
</comment>
<comment type="similarity">
    <text evidence="1">Belongs to the sugar phosphate cyclases superfamily. Dehydroquinate synthase family.</text>
</comment>
<organism>
    <name type="scientific">Arthrobacter sp. (strain FB24)</name>
    <dbReference type="NCBI Taxonomy" id="290399"/>
    <lineage>
        <taxon>Bacteria</taxon>
        <taxon>Bacillati</taxon>
        <taxon>Actinomycetota</taxon>
        <taxon>Actinomycetes</taxon>
        <taxon>Micrococcales</taxon>
        <taxon>Micrococcaceae</taxon>
        <taxon>Arthrobacter</taxon>
    </lineage>
</organism>